<feature type="chain" id="PRO_0000354374" description="Small ribosomal subunit protein uS19c">
    <location>
        <begin position="1"/>
        <end position="92"/>
    </location>
</feature>
<proteinExistence type="inferred from homology"/>
<reference key="1">
    <citation type="journal article" date="2006" name="Science">
        <title>The genome of black cottonwood, Populus trichocarpa (Torr. &amp; Gray).</title>
        <authorList>
            <person name="Tuskan G.A."/>
            <person name="Difazio S."/>
            <person name="Jansson S."/>
            <person name="Bohlmann J."/>
            <person name="Grigoriev I."/>
            <person name="Hellsten U."/>
            <person name="Putnam N."/>
            <person name="Ralph S."/>
            <person name="Rombauts S."/>
            <person name="Salamov A."/>
            <person name="Schein J."/>
            <person name="Sterck L."/>
            <person name="Aerts A."/>
            <person name="Bhalerao R.R."/>
            <person name="Bhalerao R.P."/>
            <person name="Blaudez D."/>
            <person name="Boerjan W."/>
            <person name="Brun A."/>
            <person name="Brunner A."/>
            <person name="Busov V."/>
            <person name="Campbell M."/>
            <person name="Carlson J."/>
            <person name="Chalot M."/>
            <person name="Chapman J."/>
            <person name="Chen G.-L."/>
            <person name="Cooper D."/>
            <person name="Coutinho P.M."/>
            <person name="Couturier J."/>
            <person name="Covert S."/>
            <person name="Cronk Q."/>
            <person name="Cunningham R."/>
            <person name="Davis J."/>
            <person name="Degroeve S."/>
            <person name="Dejardin A."/>
            <person name="dePamphilis C.W."/>
            <person name="Detter J."/>
            <person name="Dirks B."/>
            <person name="Dubchak I."/>
            <person name="Duplessis S."/>
            <person name="Ehlting J."/>
            <person name="Ellis B."/>
            <person name="Gendler K."/>
            <person name="Goodstein D."/>
            <person name="Gribskov M."/>
            <person name="Grimwood J."/>
            <person name="Groover A."/>
            <person name="Gunter L."/>
            <person name="Hamberger B."/>
            <person name="Heinze B."/>
            <person name="Helariutta Y."/>
            <person name="Henrissat B."/>
            <person name="Holligan D."/>
            <person name="Holt R."/>
            <person name="Huang W."/>
            <person name="Islam-Faridi N."/>
            <person name="Jones S."/>
            <person name="Jones-Rhoades M."/>
            <person name="Jorgensen R."/>
            <person name="Joshi C."/>
            <person name="Kangasjaervi J."/>
            <person name="Karlsson J."/>
            <person name="Kelleher C."/>
            <person name="Kirkpatrick R."/>
            <person name="Kirst M."/>
            <person name="Kohler A."/>
            <person name="Kalluri U."/>
            <person name="Larimer F."/>
            <person name="Leebens-Mack J."/>
            <person name="Leple J.-C."/>
            <person name="Locascio P."/>
            <person name="Lou Y."/>
            <person name="Lucas S."/>
            <person name="Martin F."/>
            <person name="Montanini B."/>
            <person name="Napoli C."/>
            <person name="Nelson D.R."/>
            <person name="Nelson C."/>
            <person name="Nieminen K."/>
            <person name="Nilsson O."/>
            <person name="Pereda V."/>
            <person name="Peter G."/>
            <person name="Philippe R."/>
            <person name="Pilate G."/>
            <person name="Poliakov A."/>
            <person name="Razumovskaya J."/>
            <person name="Richardson P."/>
            <person name="Rinaldi C."/>
            <person name="Ritland K."/>
            <person name="Rouze P."/>
            <person name="Ryaboy D."/>
            <person name="Schmutz J."/>
            <person name="Schrader J."/>
            <person name="Segerman B."/>
            <person name="Shin H."/>
            <person name="Siddiqui A."/>
            <person name="Sterky F."/>
            <person name="Terry A."/>
            <person name="Tsai C.-J."/>
            <person name="Uberbacher E."/>
            <person name="Unneberg P."/>
            <person name="Vahala J."/>
            <person name="Wall K."/>
            <person name="Wessler S."/>
            <person name="Yang G."/>
            <person name="Yin T."/>
            <person name="Douglas C."/>
            <person name="Marra M."/>
            <person name="Sandberg G."/>
            <person name="Van de Peer Y."/>
            <person name="Rokhsar D.S."/>
        </authorList>
    </citation>
    <scope>NUCLEOTIDE SEQUENCE [LARGE SCALE GENOMIC DNA]</scope>
    <source>
        <strain>cv. Nisqually</strain>
    </source>
</reference>
<name>RR19_POPTR</name>
<comment type="function">
    <text evidence="1">Protein S19 forms a complex with S13 that binds strongly to the 16S ribosomal RNA.</text>
</comment>
<comment type="subcellular location">
    <subcellularLocation>
        <location>Plastid</location>
        <location>Chloroplast</location>
    </subcellularLocation>
</comment>
<comment type="similarity">
    <text evidence="1">Belongs to the universal ribosomal protein uS19 family.</text>
</comment>
<organism>
    <name type="scientific">Populus trichocarpa</name>
    <name type="common">Western balsam poplar</name>
    <name type="synonym">Populus balsamifera subsp. trichocarpa</name>
    <dbReference type="NCBI Taxonomy" id="3694"/>
    <lineage>
        <taxon>Eukaryota</taxon>
        <taxon>Viridiplantae</taxon>
        <taxon>Streptophyta</taxon>
        <taxon>Embryophyta</taxon>
        <taxon>Tracheophyta</taxon>
        <taxon>Spermatophyta</taxon>
        <taxon>Magnoliopsida</taxon>
        <taxon>eudicotyledons</taxon>
        <taxon>Gunneridae</taxon>
        <taxon>Pentapetalae</taxon>
        <taxon>rosids</taxon>
        <taxon>fabids</taxon>
        <taxon>Malpighiales</taxon>
        <taxon>Salicaceae</taxon>
        <taxon>Saliceae</taxon>
        <taxon>Populus</taxon>
    </lineage>
</organism>
<dbReference type="EMBL" id="EF489041">
    <property type="protein sequence ID" value="ABO36746.1"/>
    <property type="molecule type" value="Genomic_DNA"/>
</dbReference>
<dbReference type="EMBL" id="EF489041">
    <property type="protein sequence ID" value="ABO36782.1"/>
    <property type="molecule type" value="Genomic_DNA"/>
</dbReference>
<dbReference type="SMR" id="A4GYV1"/>
<dbReference type="FunCoup" id="A4GYV1">
    <property type="interactions" value="100"/>
</dbReference>
<dbReference type="STRING" id="3694.A4GYV1"/>
<dbReference type="EnsemblPlants" id="Potri.013G137688.1.v4.1">
    <property type="protein sequence ID" value="Potri.013G137688.1.v4.1"/>
    <property type="gene ID" value="Potri.013G137688.v4.1"/>
</dbReference>
<dbReference type="Gramene" id="Potri.013G137688.1.v4.1">
    <property type="protein sequence ID" value="Potri.013G137688.1.v4.1"/>
    <property type="gene ID" value="Potri.013G137688.v4.1"/>
</dbReference>
<dbReference type="KEGG" id="pop:4929713"/>
<dbReference type="KEGG" id="pop:4929772"/>
<dbReference type="InParanoid" id="A4GYV1"/>
<dbReference type="OMA" id="KGPFVDP"/>
<dbReference type="OrthoDB" id="2043at2759"/>
<dbReference type="Proteomes" id="UP000006729">
    <property type="component" value="Chloroplast"/>
</dbReference>
<dbReference type="ExpressionAtlas" id="A4GYV1">
    <property type="expression patterns" value="baseline and differential"/>
</dbReference>
<dbReference type="GO" id="GO:0009507">
    <property type="term" value="C:chloroplast"/>
    <property type="evidence" value="ECO:0007669"/>
    <property type="project" value="UniProtKB-SubCell"/>
</dbReference>
<dbReference type="GO" id="GO:0005763">
    <property type="term" value="C:mitochondrial small ribosomal subunit"/>
    <property type="evidence" value="ECO:0000318"/>
    <property type="project" value="GO_Central"/>
</dbReference>
<dbReference type="GO" id="GO:0019843">
    <property type="term" value="F:rRNA binding"/>
    <property type="evidence" value="ECO:0007669"/>
    <property type="project" value="UniProtKB-UniRule"/>
</dbReference>
<dbReference type="GO" id="GO:0003735">
    <property type="term" value="F:structural constituent of ribosome"/>
    <property type="evidence" value="ECO:0000318"/>
    <property type="project" value="GO_Central"/>
</dbReference>
<dbReference type="GO" id="GO:0000028">
    <property type="term" value="P:ribosomal small subunit assembly"/>
    <property type="evidence" value="ECO:0000318"/>
    <property type="project" value="GO_Central"/>
</dbReference>
<dbReference type="GO" id="GO:0006412">
    <property type="term" value="P:translation"/>
    <property type="evidence" value="ECO:0007669"/>
    <property type="project" value="UniProtKB-UniRule"/>
</dbReference>
<dbReference type="FunFam" id="3.30.860.10:FF:000001">
    <property type="entry name" value="30S ribosomal protein S19"/>
    <property type="match status" value="1"/>
</dbReference>
<dbReference type="Gene3D" id="3.30.860.10">
    <property type="entry name" value="30s Ribosomal Protein S19, Chain A"/>
    <property type="match status" value="1"/>
</dbReference>
<dbReference type="HAMAP" id="MF_00531">
    <property type="entry name" value="Ribosomal_uS19"/>
    <property type="match status" value="1"/>
</dbReference>
<dbReference type="InterPro" id="IPR002222">
    <property type="entry name" value="Ribosomal_uS19"/>
</dbReference>
<dbReference type="InterPro" id="IPR005732">
    <property type="entry name" value="Ribosomal_uS19_bac-type"/>
</dbReference>
<dbReference type="InterPro" id="IPR020934">
    <property type="entry name" value="Ribosomal_uS19_CS"/>
</dbReference>
<dbReference type="InterPro" id="IPR023575">
    <property type="entry name" value="Ribosomal_uS19_SF"/>
</dbReference>
<dbReference type="NCBIfam" id="TIGR01050">
    <property type="entry name" value="rpsS_bact"/>
    <property type="match status" value="1"/>
</dbReference>
<dbReference type="PANTHER" id="PTHR11880">
    <property type="entry name" value="RIBOSOMAL PROTEIN S19P FAMILY MEMBER"/>
    <property type="match status" value="1"/>
</dbReference>
<dbReference type="PANTHER" id="PTHR11880:SF8">
    <property type="entry name" value="SMALL RIBOSOMAL SUBUNIT PROTEIN US19M"/>
    <property type="match status" value="1"/>
</dbReference>
<dbReference type="Pfam" id="PF00203">
    <property type="entry name" value="Ribosomal_S19"/>
    <property type="match status" value="1"/>
</dbReference>
<dbReference type="PIRSF" id="PIRSF002144">
    <property type="entry name" value="Ribosomal_S19"/>
    <property type="match status" value="1"/>
</dbReference>
<dbReference type="PRINTS" id="PR00975">
    <property type="entry name" value="RIBOSOMALS19"/>
</dbReference>
<dbReference type="SUPFAM" id="SSF54570">
    <property type="entry name" value="Ribosomal protein S19"/>
    <property type="match status" value="1"/>
</dbReference>
<dbReference type="PROSITE" id="PS00323">
    <property type="entry name" value="RIBOSOMAL_S19"/>
    <property type="match status" value="1"/>
</dbReference>
<keyword id="KW-0150">Chloroplast</keyword>
<keyword id="KW-0934">Plastid</keyword>
<keyword id="KW-1185">Reference proteome</keyword>
<keyword id="KW-0687">Ribonucleoprotein</keyword>
<keyword id="KW-0689">Ribosomal protein</keyword>
<keyword id="KW-0694">RNA-binding</keyword>
<keyword id="KW-0699">rRNA-binding</keyword>
<accession>A4GYV1</accession>
<sequence>MTRSLKKNPFVANHLLRKINKLNTKAEKNLIVTWSRASTIIPTMIGHTIAIHNGKEHLPIYITDRMVGHKLGEFAPTLNFRGHAKNDNKSRR</sequence>
<geneLocation type="chloroplast"/>
<evidence type="ECO:0000255" key="1">
    <source>
        <dbReference type="HAMAP-Rule" id="MF_00531"/>
    </source>
</evidence>
<evidence type="ECO:0000305" key="2"/>
<gene>
    <name evidence="1" type="primary">rps19-1</name>
    <name type="ordered locus">Poptr_cp063</name>
</gene>
<gene>
    <name evidence="1" type="primary">rps19-2</name>
    <name type="ordered locus">Poptr_cp101</name>
</gene>
<protein>
    <recommendedName>
        <fullName evidence="1">Small ribosomal subunit protein uS19c</fullName>
    </recommendedName>
    <alternativeName>
        <fullName evidence="2">30S ribosomal protein S19, chloroplastic</fullName>
    </alternativeName>
</protein>